<feature type="signal peptide" evidence="2">
    <location>
        <begin position="1"/>
        <end position="20"/>
    </location>
</feature>
<feature type="chain" id="PRO_0000377714" description="Uncharacterized ABC transporter substrate-binding lipoprotein YvrC">
    <location>
        <begin position="21"/>
        <end position="314"/>
    </location>
</feature>
<feature type="domain" description="Fe/B12 periplasmic-binding" evidence="3">
    <location>
        <begin position="59"/>
        <end position="311"/>
    </location>
</feature>
<feature type="lipid moiety-binding region" description="N-palmitoyl cysteine" evidence="2">
    <location>
        <position position="21"/>
    </location>
</feature>
<feature type="lipid moiety-binding region" description="S-diacylglycerol cysteine" evidence="2">
    <location>
        <position position="21"/>
    </location>
</feature>
<proteinExistence type="inferred from homology"/>
<dbReference type="EMBL" id="AJ223978">
    <property type="protein sequence ID" value="CAA11735.1"/>
    <property type="molecule type" value="Genomic_DNA"/>
</dbReference>
<dbReference type="EMBL" id="AL009126">
    <property type="protein sequence ID" value="CAB15308.1"/>
    <property type="molecule type" value="Genomic_DNA"/>
</dbReference>
<dbReference type="PIR" id="G70046">
    <property type="entry name" value="G70046"/>
</dbReference>
<dbReference type="RefSeq" id="NP_391198.1">
    <property type="nucleotide sequence ID" value="NC_000964.3"/>
</dbReference>
<dbReference type="RefSeq" id="WP_003243040.1">
    <property type="nucleotide sequence ID" value="NZ_OZ025638.1"/>
</dbReference>
<dbReference type="SMR" id="O34805"/>
<dbReference type="FunCoup" id="O34805">
    <property type="interactions" value="263"/>
</dbReference>
<dbReference type="STRING" id="224308.BSU33180"/>
<dbReference type="jPOST" id="O34805"/>
<dbReference type="PaxDb" id="224308-BSU33180"/>
<dbReference type="DNASU" id="935980"/>
<dbReference type="EnsemblBacteria" id="CAB15308">
    <property type="protein sequence ID" value="CAB15308"/>
    <property type="gene ID" value="BSU_33180"/>
</dbReference>
<dbReference type="GeneID" id="935980"/>
<dbReference type="KEGG" id="bsu:BSU33180"/>
<dbReference type="PATRIC" id="fig|224308.179.peg.3597"/>
<dbReference type="eggNOG" id="COG0614">
    <property type="taxonomic scope" value="Bacteria"/>
</dbReference>
<dbReference type="InParanoid" id="O34805"/>
<dbReference type="OrthoDB" id="9816357at2"/>
<dbReference type="PhylomeDB" id="O34805"/>
<dbReference type="BioCyc" id="BSUB:BSU33180-MONOMER"/>
<dbReference type="Proteomes" id="UP000001570">
    <property type="component" value="Chromosome"/>
</dbReference>
<dbReference type="GO" id="GO:0005886">
    <property type="term" value="C:plasma membrane"/>
    <property type="evidence" value="ECO:0007669"/>
    <property type="project" value="UniProtKB-SubCell"/>
</dbReference>
<dbReference type="GO" id="GO:0071281">
    <property type="term" value="P:cellular response to iron ion"/>
    <property type="evidence" value="ECO:0000318"/>
    <property type="project" value="GO_Central"/>
</dbReference>
<dbReference type="CDD" id="cd01143">
    <property type="entry name" value="YvrC"/>
    <property type="match status" value="1"/>
</dbReference>
<dbReference type="FunFam" id="3.40.50.1980:FF:000035">
    <property type="entry name" value="Iron ABC transporter substrate-binding protein"/>
    <property type="match status" value="1"/>
</dbReference>
<dbReference type="Gene3D" id="3.40.50.1980">
    <property type="entry name" value="Nitrogenase molybdenum iron protein domain"/>
    <property type="match status" value="2"/>
</dbReference>
<dbReference type="InterPro" id="IPR050902">
    <property type="entry name" value="ABC_Transporter_SBP"/>
</dbReference>
<dbReference type="InterPro" id="IPR002491">
    <property type="entry name" value="ABC_transptr_periplasmic_BD"/>
</dbReference>
<dbReference type="InterPro" id="IPR054828">
    <property type="entry name" value="Vit_B12_bind_prot"/>
</dbReference>
<dbReference type="NCBIfam" id="NF038402">
    <property type="entry name" value="TroA_like"/>
    <property type="match status" value="1"/>
</dbReference>
<dbReference type="PANTHER" id="PTHR30535:SF34">
    <property type="entry name" value="MOLYBDATE-BINDING PROTEIN MOLA"/>
    <property type="match status" value="1"/>
</dbReference>
<dbReference type="PANTHER" id="PTHR30535">
    <property type="entry name" value="VITAMIN B12-BINDING PROTEIN"/>
    <property type="match status" value="1"/>
</dbReference>
<dbReference type="Pfam" id="PF01497">
    <property type="entry name" value="Peripla_BP_2"/>
    <property type="match status" value="1"/>
</dbReference>
<dbReference type="SUPFAM" id="SSF53807">
    <property type="entry name" value="Helical backbone' metal receptor"/>
    <property type="match status" value="1"/>
</dbReference>
<dbReference type="PROSITE" id="PS50983">
    <property type="entry name" value="FE_B12_PBP"/>
    <property type="match status" value="1"/>
</dbReference>
<dbReference type="PROSITE" id="PS51257">
    <property type="entry name" value="PROKAR_LIPOPROTEIN"/>
    <property type="match status" value="1"/>
</dbReference>
<sequence>MKKRAGIWAALLLAAVMLAGCGNPADQKDSKAKQKTEVFPVTIDDASNQDVTIKKEPKKIVSLMPSNTEITYALGLGDKVVGVTTNDTYPKEVKKVEKVGDMNVNVEKVISLKPDLVLAHESSMSASADAIKQLKDAGITVLTVNDAQSFSEVYKSIEMIGEAGGAEKKADQLVKSMKSDLKDIQEKAKTISKDEEKSVFIEVSPDPDIYTTGKDTFMNEMLNVIHAKNAAADQTGWVQMTDEAIVKLNPDAIVTTDGVKAKAVEKRDGWSEINAVKHHRVYDVDPDLVTRSGPRLIEGVEELAESIYPDTFKE</sequence>
<reference key="1">
    <citation type="journal article" date="1998" name="Microbiology">
        <title>The yvsA-yvqA (293 degrees - 289 degrees) region of the Bacillus subtilis chromosome containing genes involved in metal ion uptake and a putative sigma factor.</title>
        <authorList>
            <person name="Wipat A."/>
            <person name="Brignell C.S."/>
            <person name="Guy J.B."/>
            <person name="Rose M."/>
            <person name="Emmerson P.T."/>
            <person name="Harwood C.R."/>
        </authorList>
    </citation>
    <scope>NUCLEOTIDE SEQUENCE [GENOMIC DNA]</scope>
    <source>
        <strain>168</strain>
    </source>
</reference>
<reference key="2">
    <citation type="journal article" date="1997" name="Nature">
        <title>The complete genome sequence of the Gram-positive bacterium Bacillus subtilis.</title>
        <authorList>
            <person name="Kunst F."/>
            <person name="Ogasawara N."/>
            <person name="Moszer I."/>
            <person name="Albertini A.M."/>
            <person name="Alloni G."/>
            <person name="Azevedo V."/>
            <person name="Bertero M.G."/>
            <person name="Bessieres P."/>
            <person name="Bolotin A."/>
            <person name="Borchert S."/>
            <person name="Borriss R."/>
            <person name="Boursier L."/>
            <person name="Brans A."/>
            <person name="Braun M."/>
            <person name="Brignell S.C."/>
            <person name="Bron S."/>
            <person name="Brouillet S."/>
            <person name="Bruschi C.V."/>
            <person name="Caldwell B."/>
            <person name="Capuano V."/>
            <person name="Carter N.M."/>
            <person name="Choi S.-K."/>
            <person name="Codani J.-J."/>
            <person name="Connerton I.F."/>
            <person name="Cummings N.J."/>
            <person name="Daniel R.A."/>
            <person name="Denizot F."/>
            <person name="Devine K.M."/>
            <person name="Duesterhoeft A."/>
            <person name="Ehrlich S.D."/>
            <person name="Emmerson P.T."/>
            <person name="Entian K.-D."/>
            <person name="Errington J."/>
            <person name="Fabret C."/>
            <person name="Ferrari E."/>
            <person name="Foulger D."/>
            <person name="Fritz C."/>
            <person name="Fujita M."/>
            <person name="Fujita Y."/>
            <person name="Fuma S."/>
            <person name="Galizzi A."/>
            <person name="Galleron N."/>
            <person name="Ghim S.-Y."/>
            <person name="Glaser P."/>
            <person name="Goffeau A."/>
            <person name="Golightly E.J."/>
            <person name="Grandi G."/>
            <person name="Guiseppi G."/>
            <person name="Guy B.J."/>
            <person name="Haga K."/>
            <person name="Haiech J."/>
            <person name="Harwood C.R."/>
            <person name="Henaut A."/>
            <person name="Hilbert H."/>
            <person name="Holsappel S."/>
            <person name="Hosono S."/>
            <person name="Hullo M.-F."/>
            <person name="Itaya M."/>
            <person name="Jones L.-M."/>
            <person name="Joris B."/>
            <person name="Karamata D."/>
            <person name="Kasahara Y."/>
            <person name="Klaerr-Blanchard M."/>
            <person name="Klein C."/>
            <person name="Kobayashi Y."/>
            <person name="Koetter P."/>
            <person name="Koningstein G."/>
            <person name="Krogh S."/>
            <person name="Kumano M."/>
            <person name="Kurita K."/>
            <person name="Lapidus A."/>
            <person name="Lardinois S."/>
            <person name="Lauber J."/>
            <person name="Lazarevic V."/>
            <person name="Lee S.-M."/>
            <person name="Levine A."/>
            <person name="Liu H."/>
            <person name="Masuda S."/>
            <person name="Mauel C."/>
            <person name="Medigue C."/>
            <person name="Medina N."/>
            <person name="Mellado R.P."/>
            <person name="Mizuno M."/>
            <person name="Moestl D."/>
            <person name="Nakai S."/>
            <person name="Noback M."/>
            <person name="Noone D."/>
            <person name="O'Reilly M."/>
            <person name="Ogawa K."/>
            <person name="Ogiwara A."/>
            <person name="Oudega B."/>
            <person name="Park S.-H."/>
            <person name="Parro V."/>
            <person name="Pohl T.M."/>
            <person name="Portetelle D."/>
            <person name="Porwollik S."/>
            <person name="Prescott A.M."/>
            <person name="Presecan E."/>
            <person name="Pujic P."/>
            <person name="Purnelle B."/>
            <person name="Rapoport G."/>
            <person name="Rey M."/>
            <person name="Reynolds S."/>
            <person name="Rieger M."/>
            <person name="Rivolta C."/>
            <person name="Rocha E."/>
            <person name="Roche B."/>
            <person name="Rose M."/>
            <person name="Sadaie Y."/>
            <person name="Sato T."/>
            <person name="Scanlan E."/>
            <person name="Schleich S."/>
            <person name="Schroeter R."/>
            <person name="Scoffone F."/>
            <person name="Sekiguchi J."/>
            <person name="Sekowska A."/>
            <person name="Seror S.J."/>
            <person name="Serror P."/>
            <person name="Shin B.-S."/>
            <person name="Soldo B."/>
            <person name="Sorokin A."/>
            <person name="Tacconi E."/>
            <person name="Takagi T."/>
            <person name="Takahashi H."/>
            <person name="Takemaru K."/>
            <person name="Takeuchi M."/>
            <person name="Tamakoshi A."/>
            <person name="Tanaka T."/>
            <person name="Terpstra P."/>
            <person name="Tognoni A."/>
            <person name="Tosato V."/>
            <person name="Uchiyama S."/>
            <person name="Vandenbol M."/>
            <person name="Vannier F."/>
            <person name="Vassarotti A."/>
            <person name="Viari A."/>
            <person name="Wambutt R."/>
            <person name="Wedler E."/>
            <person name="Wedler H."/>
            <person name="Weitzenegger T."/>
            <person name="Winters P."/>
            <person name="Wipat A."/>
            <person name="Yamamoto H."/>
            <person name="Yamane K."/>
            <person name="Yasumoto K."/>
            <person name="Yata K."/>
            <person name="Yoshida K."/>
            <person name="Yoshikawa H.-F."/>
            <person name="Zumstein E."/>
            <person name="Yoshikawa H."/>
            <person name="Danchin A."/>
        </authorList>
    </citation>
    <scope>NUCLEOTIDE SEQUENCE [LARGE SCALE GENOMIC DNA]</scope>
    <source>
        <strain>168</strain>
    </source>
</reference>
<evidence type="ECO:0000250" key="1"/>
<evidence type="ECO:0000255" key="2">
    <source>
        <dbReference type="PROSITE-ProRule" id="PRU00303"/>
    </source>
</evidence>
<evidence type="ECO:0000255" key="3">
    <source>
        <dbReference type="PROSITE-ProRule" id="PRU00344"/>
    </source>
</evidence>
<evidence type="ECO:0000305" key="4"/>
<accession>O34805</accession>
<accession>Q7B2K1</accession>
<name>YVRC_BACSU</name>
<keyword id="KW-1003">Cell membrane</keyword>
<keyword id="KW-0449">Lipoprotein</keyword>
<keyword id="KW-0472">Membrane</keyword>
<keyword id="KW-0564">Palmitate</keyword>
<keyword id="KW-1185">Reference proteome</keyword>
<keyword id="KW-0732">Signal</keyword>
<gene>
    <name type="primary">yvrC</name>
    <name type="ordered locus">BSU33180</name>
</gene>
<comment type="function">
    <text evidence="1">Probably part of an ABC transporter complex.</text>
</comment>
<comment type="subunit">
    <text evidence="4">The complex is composed of two ATP-binding proteins (YvrA), two transmembrane proteins (YvrB) and a solute-binding protein (YvrC).</text>
</comment>
<comment type="subcellular location">
    <subcellularLocation>
        <location evidence="2">Cell membrane</location>
        <topology evidence="2">Lipid-anchor</topology>
    </subcellularLocation>
</comment>
<comment type="similarity">
    <text evidence="4">Belongs to the bacterial solute-binding protein 8 family.</text>
</comment>
<organism>
    <name type="scientific">Bacillus subtilis (strain 168)</name>
    <dbReference type="NCBI Taxonomy" id="224308"/>
    <lineage>
        <taxon>Bacteria</taxon>
        <taxon>Bacillati</taxon>
        <taxon>Bacillota</taxon>
        <taxon>Bacilli</taxon>
        <taxon>Bacillales</taxon>
        <taxon>Bacillaceae</taxon>
        <taxon>Bacillus</taxon>
    </lineage>
</organism>
<protein>
    <recommendedName>
        <fullName>Uncharacterized ABC transporter substrate-binding lipoprotein YvrC</fullName>
    </recommendedName>
</protein>